<keyword id="KW-0413">Isomerase</keyword>
<keyword id="KW-0460">Magnesium</keyword>
<keyword id="KW-0479">Metal-binding</keyword>
<keyword id="KW-0597">Phosphoprotein</keyword>
<feature type="chain" id="PRO_1000201059" description="Phosphoglucosamine mutase">
    <location>
        <begin position="1"/>
        <end position="448"/>
    </location>
</feature>
<feature type="active site" description="Phosphoserine intermediate" evidence="1">
    <location>
        <position position="100"/>
    </location>
</feature>
<feature type="binding site" description="via phosphate group" evidence="1">
    <location>
        <position position="100"/>
    </location>
    <ligand>
        <name>Mg(2+)</name>
        <dbReference type="ChEBI" id="CHEBI:18420"/>
    </ligand>
</feature>
<feature type="binding site" evidence="1">
    <location>
        <position position="240"/>
    </location>
    <ligand>
        <name>Mg(2+)</name>
        <dbReference type="ChEBI" id="CHEBI:18420"/>
    </ligand>
</feature>
<feature type="binding site" evidence="1">
    <location>
        <position position="242"/>
    </location>
    <ligand>
        <name>Mg(2+)</name>
        <dbReference type="ChEBI" id="CHEBI:18420"/>
    </ligand>
</feature>
<feature type="binding site" evidence="1">
    <location>
        <position position="244"/>
    </location>
    <ligand>
        <name>Mg(2+)</name>
        <dbReference type="ChEBI" id="CHEBI:18420"/>
    </ligand>
</feature>
<feature type="modified residue" description="Phosphoserine" evidence="1">
    <location>
        <position position="100"/>
    </location>
</feature>
<gene>
    <name evidence="1" type="primary">glmM</name>
    <name type="ordered locus">BCAH820_0180</name>
</gene>
<name>GLMM_BACC0</name>
<protein>
    <recommendedName>
        <fullName evidence="1">Phosphoglucosamine mutase</fullName>
        <ecNumber evidence="1">5.4.2.10</ecNumber>
    </recommendedName>
</protein>
<reference key="1">
    <citation type="submission" date="2008-10" db="EMBL/GenBank/DDBJ databases">
        <title>Genome sequence of Bacillus cereus AH820.</title>
        <authorList>
            <person name="Dodson R.J."/>
            <person name="Durkin A.S."/>
            <person name="Rosovitz M.J."/>
            <person name="Rasko D.A."/>
            <person name="Hoffmaster A."/>
            <person name="Ravel J."/>
            <person name="Sutton G."/>
        </authorList>
    </citation>
    <scope>NUCLEOTIDE SEQUENCE [LARGE SCALE GENOMIC DNA]</scope>
    <source>
        <strain>AH820</strain>
    </source>
</reference>
<dbReference type="EC" id="5.4.2.10" evidence="1"/>
<dbReference type="EMBL" id="CP001283">
    <property type="protein sequence ID" value="ACK88919.1"/>
    <property type="molecule type" value="Genomic_DNA"/>
</dbReference>
<dbReference type="RefSeq" id="WP_000521474.1">
    <property type="nucleotide sequence ID" value="NC_011773.1"/>
</dbReference>
<dbReference type="SMR" id="B7JL64"/>
<dbReference type="GeneID" id="75083449"/>
<dbReference type="KEGG" id="bcu:BCAH820_0180"/>
<dbReference type="HOGENOM" id="CLU_016950_7_0_9"/>
<dbReference type="Proteomes" id="UP000001363">
    <property type="component" value="Chromosome"/>
</dbReference>
<dbReference type="GO" id="GO:0005829">
    <property type="term" value="C:cytosol"/>
    <property type="evidence" value="ECO:0007669"/>
    <property type="project" value="TreeGrafter"/>
</dbReference>
<dbReference type="GO" id="GO:0000287">
    <property type="term" value="F:magnesium ion binding"/>
    <property type="evidence" value="ECO:0007669"/>
    <property type="project" value="UniProtKB-UniRule"/>
</dbReference>
<dbReference type="GO" id="GO:0008966">
    <property type="term" value="F:phosphoglucosamine mutase activity"/>
    <property type="evidence" value="ECO:0007669"/>
    <property type="project" value="UniProtKB-UniRule"/>
</dbReference>
<dbReference type="GO" id="GO:0004615">
    <property type="term" value="F:phosphomannomutase activity"/>
    <property type="evidence" value="ECO:0007669"/>
    <property type="project" value="TreeGrafter"/>
</dbReference>
<dbReference type="GO" id="GO:0005975">
    <property type="term" value="P:carbohydrate metabolic process"/>
    <property type="evidence" value="ECO:0007669"/>
    <property type="project" value="InterPro"/>
</dbReference>
<dbReference type="GO" id="GO:0009252">
    <property type="term" value="P:peptidoglycan biosynthetic process"/>
    <property type="evidence" value="ECO:0007669"/>
    <property type="project" value="TreeGrafter"/>
</dbReference>
<dbReference type="GO" id="GO:0006048">
    <property type="term" value="P:UDP-N-acetylglucosamine biosynthetic process"/>
    <property type="evidence" value="ECO:0007669"/>
    <property type="project" value="TreeGrafter"/>
</dbReference>
<dbReference type="CDD" id="cd05802">
    <property type="entry name" value="GlmM"/>
    <property type="match status" value="1"/>
</dbReference>
<dbReference type="FunFam" id="3.30.310.50:FF:000001">
    <property type="entry name" value="Phosphoglucosamine mutase"/>
    <property type="match status" value="1"/>
</dbReference>
<dbReference type="FunFam" id="3.40.120.10:FF:000001">
    <property type="entry name" value="Phosphoglucosamine mutase"/>
    <property type="match status" value="1"/>
</dbReference>
<dbReference type="FunFam" id="3.40.120.10:FF:000002">
    <property type="entry name" value="Phosphoglucosamine mutase"/>
    <property type="match status" value="1"/>
</dbReference>
<dbReference type="Gene3D" id="3.40.120.10">
    <property type="entry name" value="Alpha-D-Glucose-1,6-Bisphosphate, subunit A, domain 3"/>
    <property type="match status" value="3"/>
</dbReference>
<dbReference type="Gene3D" id="3.30.310.50">
    <property type="entry name" value="Alpha-D-phosphohexomutase, C-terminal domain"/>
    <property type="match status" value="1"/>
</dbReference>
<dbReference type="HAMAP" id="MF_01554_B">
    <property type="entry name" value="GlmM_B"/>
    <property type="match status" value="1"/>
</dbReference>
<dbReference type="InterPro" id="IPR005844">
    <property type="entry name" value="A-D-PHexomutase_a/b/a-I"/>
</dbReference>
<dbReference type="InterPro" id="IPR016055">
    <property type="entry name" value="A-D-PHexomutase_a/b/a-I/II/III"/>
</dbReference>
<dbReference type="InterPro" id="IPR005845">
    <property type="entry name" value="A-D-PHexomutase_a/b/a-II"/>
</dbReference>
<dbReference type="InterPro" id="IPR005846">
    <property type="entry name" value="A-D-PHexomutase_a/b/a-III"/>
</dbReference>
<dbReference type="InterPro" id="IPR005843">
    <property type="entry name" value="A-D-PHexomutase_C"/>
</dbReference>
<dbReference type="InterPro" id="IPR036900">
    <property type="entry name" value="A-D-PHexomutase_C_sf"/>
</dbReference>
<dbReference type="InterPro" id="IPR016066">
    <property type="entry name" value="A-D-PHexomutase_CS"/>
</dbReference>
<dbReference type="InterPro" id="IPR005841">
    <property type="entry name" value="Alpha-D-phosphohexomutase_SF"/>
</dbReference>
<dbReference type="InterPro" id="IPR006352">
    <property type="entry name" value="GlmM_bact"/>
</dbReference>
<dbReference type="InterPro" id="IPR050060">
    <property type="entry name" value="Phosphoglucosamine_mutase"/>
</dbReference>
<dbReference type="NCBIfam" id="TIGR01455">
    <property type="entry name" value="glmM"/>
    <property type="match status" value="1"/>
</dbReference>
<dbReference type="NCBIfam" id="NF008139">
    <property type="entry name" value="PRK10887.1"/>
    <property type="match status" value="1"/>
</dbReference>
<dbReference type="PANTHER" id="PTHR42946:SF1">
    <property type="entry name" value="PHOSPHOGLUCOMUTASE (ALPHA-D-GLUCOSE-1,6-BISPHOSPHATE-DEPENDENT)"/>
    <property type="match status" value="1"/>
</dbReference>
<dbReference type="PANTHER" id="PTHR42946">
    <property type="entry name" value="PHOSPHOHEXOSE MUTASE"/>
    <property type="match status" value="1"/>
</dbReference>
<dbReference type="Pfam" id="PF02878">
    <property type="entry name" value="PGM_PMM_I"/>
    <property type="match status" value="1"/>
</dbReference>
<dbReference type="Pfam" id="PF02879">
    <property type="entry name" value="PGM_PMM_II"/>
    <property type="match status" value="1"/>
</dbReference>
<dbReference type="Pfam" id="PF02880">
    <property type="entry name" value="PGM_PMM_III"/>
    <property type="match status" value="1"/>
</dbReference>
<dbReference type="Pfam" id="PF00408">
    <property type="entry name" value="PGM_PMM_IV"/>
    <property type="match status" value="1"/>
</dbReference>
<dbReference type="PRINTS" id="PR00509">
    <property type="entry name" value="PGMPMM"/>
</dbReference>
<dbReference type="SUPFAM" id="SSF55957">
    <property type="entry name" value="Phosphoglucomutase, C-terminal domain"/>
    <property type="match status" value="1"/>
</dbReference>
<dbReference type="SUPFAM" id="SSF53738">
    <property type="entry name" value="Phosphoglucomutase, first 3 domains"/>
    <property type="match status" value="3"/>
</dbReference>
<dbReference type="PROSITE" id="PS00710">
    <property type="entry name" value="PGM_PMM"/>
    <property type="match status" value="1"/>
</dbReference>
<organism>
    <name type="scientific">Bacillus cereus (strain AH820)</name>
    <dbReference type="NCBI Taxonomy" id="405535"/>
    <lineage>
        <taxon>Bacteria</taxon>
        <taxon>Bacillati</taxon>
        <taxon>Bacillota</taxon>
        <taxon>Bacilli</taxon>
        <taxon>Bacillales</taxon>
        <taxon>Bacillaceae</taxon>
        <taxon>Bacillus</taxon>
        <taxon>Bacillus cereus group</taxon>
    </lineage>
</organism>
<proteinExistence type="inferred from homology"/>
<sequence length="448" mass="48417">MGKYFGTDGVRGVANKELTPELAFKIGRFGGYVLTKDTDRPKVIIGRDTRISGHMLEGALVAGLLSTGAEVMRLGVISTPGVAYLTKALDAQAGVMISASHNPVQDNGIKFFGSDGFKLTDEQEAEIEALLDKEVDELPRPTGTNLGQVSDYFEGGQKYLQYIKQTVEEDFSGLHIALDCAHGATSSLAPYLFADLEADISTMGTSPNGMNINDGVGSTHPEVLAELVKEKGADIGLAFDGDGDRLIAVDEKGNIVDGDQIMFICAKYMKETGQLKHNTVVSTVMSNLGFYKALEANGITSDKTAVGDRYVMEEMKRGGYNLGGEQSGHIILLDYITTGDGMLSALQLVNIMKMTKKPLSELAGEMTKFPQLLVNVRVTDKKLALENEKIKEIIRVVEEEMNGDGRILVRPSGTEPLIRVMAEAPTQEVCDAYVHRIVEVVKAEVGAE</sequence>
<accession>B7JL64</accession>
<evidence type="ECO:0000255" key="1">
    <source>
        <dbReference type="HAMAP-Rule" id="MF_01554"/>
    </source>
</evidence>
<comment type="function">
    <text evidence="1">Catalyzes the conversion of glucosamine-6-phosphate to glucosamine-1-phosphate.</text>
</comment>
<comment type="catalytic activity">
    <reaction evidence="1">
        <text>alpha-D-glucosamine 1-phosphate = D-glucosamine 6-phosphate</text>
        <dbReference type="Rhea" id="RHEA:23424"/>
        <dbReference type="ChEBI" id="CHEBI:58516"/>
        <dbReference type="ChEBI" id="CHEBI:58725"/>
        <dbReference type="EC" id="5.4.2.10"/>
    </reaction>
</comment>
<comment type="cofactor">
    <cofactor evidence="1">
        <name>Mg(2+)</name>
        <dbReference type="ChEBI" id="CHEBI:18420"/>
    </cofactor>
    <text evidence="1">Binds 1 Mg(2+) ion per subunit.</text>
</comment>
<comment type="PTM">
    <text evidence="1">Activated by phosphorylation.</text>
</comment>
<comment type="similarity">
    <text evidence="1">Belongs to the phosphohexose mutase family.</text>
</comment>